<organism>
    <name type="scientific">Lacticaseibacillus casei (strain BL23)</name>
    <name type="common">Lactobacillus casei</name>
    <dbReference type="NCBI Taxonomy" id="543734"/>
    <lineage>
        <taxon>Bacteria</taxon>
        <taxon>Bacillati</taxon>
        <taxon>Bacillota</taxon>
        <taxon>Bacilli</taxon>
        <taxon>Lactobacillales</taxon>
        <taxon>Lactobacillaceae</taxon>
        <taxon>Lacticaseibacillus</taxon>
    </lineage>
</organism>
<reference key="1">
    <citation type="submission" date="2008-06" db="EMBL/GenBank/DDBJ databases">
        <title>Lactobacillus casei BL23 complete genome sequence.</title>
        <authorList>
            <person name="Maze A."/>
            <person name="Boel G."/>
            <person name="Bourand A."/>
            <person name="Loux V."/>
            <person name="Gibrat J.F."/>
            <person name="Zuniga M."/>
            <person name="Hartke A."/>
            <person name="Deutscher J."/>
        </authorList>
    </citation>
    <scope>NUCLEOTIDE SEQUENCE [LARGE SCALE GENOMIC DNA]</scope>
    <source>
        <strain>BL23</strain>
    </source>
</reference>
<dbReference type="EC" id="3.4.21.88" evidence="1"/>
<dbReference type="EMBL" id="FM177140">
    <property type="protein sequence ID" value="CAQ65918.1"/>
    <property type="molecule type" value="Genomic_DNA"/>
</dbReference>
<dbReference type="SMR" id="B3WC17"/>
<dbReference type="MEROPS" id="S24.001"/>
<dbReference type="KEGG" id="lcb:LCABL_07950"/>
<dbReference type="HOGENOM" id="CLU_066192_45_1_9"/>
<dbReference type="GO" id="GO:0003677">
    <property type="term" value="F:DNA binding"/>
    <property type="evidence" value="ECO:0007669"/>
    <property type="project" value="UniProtKB-UniRule"/>
</dbReference>
<dbReference type="GO" id="GO:0004252">
    <property type="term" value="F:serine-type endopeptidase activity"/>
    <property type="evidence" value="ECO:0007669"/>
    <property type="project" value="UniProtKB-UniRule"/>
</dbReference>
<dbReference type="GO" id="GO:0006281">
    <property type="term" value="P:DNA repair"/>
    <property type="evidence" value="ECO:0007669"/>
    <property type="project" value="UniProtKB-UniRule"/>
</dbReference>
<dbReference type="GO" id="GO:0006260">
    <property type="term" value="P:DNA replication"/>
    <property type="evidence" value="ECO:0007669"/>
    <property type="project" value="UniProtKB-UniRule"/>
</dbReference>
<dbReference type="GO" id="GO:0045892">
    <property type="term" value="P:negative regulation of DNA-templated transcription"/>
    <property type="evidence" value="ECO:0007669"/>
    <property type="project" value="UniProtKB-UniRule"/>
</dbReference>
<dbReference type="GO" id="GO:0006508">
    <property type="term" value="P:proteolysis"/>
    <property type="evidence" value="ECO:0007669"/>
    <property type="project" value="InterPro"/>
</dbReference>
<dbReference type="GO" id="GO:0009432">
    <property type="term" value="P:SOS response"/>
    <property type="evidence" value="ECO:0007669"/>
    <property type="project" value="UniProtKB-UniRule"/>
</dbReference>
<dbReference type="CDD" id="cd06529">
    <property type="entry name" value="S24_LexA-like"/>
    <property type="match status" value="1"/>
</dbReference>
<dbReference type="FunFam" id="2.10.109.10:FF:000001">
    <property type="entry name" value="LexA repressor"/>
    <property type="match status" value="1"/>
</dbReference>
<dbReference type="Gene3D" id="2.10.109.10">
    <property type="entry name" value="Umud Fragment, subunit A"/>
    <property type="match status" value="1"/>
</dbReference>
<dbReference type="Gene3D" id="1.10.10.10">
    <property type="entry name" value="Winged helix-like DNA-binding domain superfamily/Winged helix DNA-binding domain"/>
    <property type="match status" value="1"/>
</dbReference>
<dbReference type="HAMAP" id="MF_00015">
    <property type="entry name" value="LexA"/>
    <property type="match status" value="1"/>
</dbReference>
<dbReference type="InterPro" id="IPR006200">
    <property type="entry name" value="LexA"/>
</dbReference>
<dbReference type="InterPro" id="IPR039418">
    <property type="entry name" value="LexA-like"/>
</dbReference>
<dbReference type="InterPro" id="IPR036286">
    <property type="entry name" value="LexA/Signal_pep-like_sf"/>
</dbReference>
<dbReference type="InterPro" id="IPR006199">
    <property type="entry name" value="LexA_DNA-bd_dom"/>
</dbReference>
<dbReference type="InterPro" id="IPR050077">
    <property type="entry name" value="LexA_repressor"/>
</dbReference>
<dbReference type="InterPro" id="IPR006197">
    <property type="entry name" value="Peptidase_S24_LexA"/>
</dbReference>
<dbReference type="InterPro" id="IPR015927">
    <property type="entry name" value="Peptidase_S24_S26A/B/C"/>
</dbReference>
<dbReference type="InterPro" id="IPR036388">
    <property type="entry name" value="WH-like_DNA-bd_sf"/>
</dbReference>
<dbReference type="InterPro" id="IPR036390">
    <property type="entry name" value="WH_DNA-bd_sf"/>
</dbReference>
<dbReference type="NCBIfam" id="TIGR00498">
    <property type="entry name" value="lexA"/>
    <property type="match status" value="1"/>
</dbReference>
<dbReference type="PANTHER" id="PTHR33516">
    <property type="entry name" value="LEXA REPRESSOR"/>
    <property type="match status" value="1"/>
</dbReference>
<dbReference type="PANTHER" id="PTHR33516:SF2">
    <property type="entry name" value="LEXA REPRESSOR-RELATED"/>
    <property type="match status" value="1"/>
</dbReference>
<dbReference type="Pfam" id="PF01726">
    <property type="entry name" value="LexA_DNA_bind"/>
    <property type="match status" value="1"/>
</dbReference>
<dbReference type="Pfam" id="PF00717">
    <property type="entry name" value="Peptidase_S24"/>
    <property type="match status" value="1"/>
</dbReference>
<dbReference type="PRINTS" id="PR00726">
    <property type="entry name" value="LEXASERPTASE"/>
</dbReference>
<dbReference type="SUPFAM" id="SSF51306">
    <property type="entry name" value="LexA/Signal peptidase"/>
    <property type="match status" value="1"/>
</dbReference>
<dbReference type="SUPFAM" id="SSF46785">
    <property type="entry name" value="Winged helix' DNA-binding domain"/>
    <property type="match status" value="1"/>
</dbReference>
<protein>
    <recommendedName>
        <fullName evidence="1">LexA repressor</fullName>
        <ecNumber evidence="1">3.4.21.88</ecNumber>
    </recommendedName>
</protein>
<accession>B3WC17</accession>
<feature type="chain" id="PRO_1000089571" description="LexA repressor">
    <location>
        <begin position="1"/>
        <end position="208"/>
    </location>
</feature>
<feature type="DNA-binding region" description="H-T-H motif" evidence="1">
    <location>
        <begin position="30"/>
        <end position="50"/>
    </location>
</feature>
<feature type="active site" description="For autocatalytic cleavage activity" evidence="1">
    <location>
        <position position="129"/>
    </location>
</feature>
<feature type="active site" description="For autocatalytic cleavage activity" evidence="1">
    <location>
        <position position="167"/>
    </location>
</feature>
<feature type="site" description="Cleavage; by autolysis" evidence="1">
    <location>
        <begin position="93"/>
        <end position="94"/>
    </location>
</feature>
<keyword id="KW-0068">Autocatalytic cleavage</keyword>
<keyword id="KW-0227">DNA damage</keyword>
<keyword id="KW-0234">DNA repair</keyword>
<keyword id="KW-0235">DNA replication</keyword>
<keyword id="KW-0238">DNA-binding</keyword>
<keyword id="KW-0378">Hydrolase</keyword>
<keyword id="KW-0678">Repressor</keyword>
<keyword id="KW-0742">SOS response</keyword>
<keyword id="KW-0804">Transcription</keyword>
<keyword id="KW-0805">Transcription regulation</keyword>
<proteinExistence type="inferred from homology"/>
<comment type="function">
    <text evidence="1">Represses a number of genes involved in the response to DNA damage (SOS response), including recA and lexA. In the presence of single-stranded DNA, RecA interacts with LexA causing an autocatalytic cleavage which disrupts the DNA-binding part of LexA, leading to derepression of the SOS regulon and eventually DNA repair.</text>
</comment>
<comment type="catalytic activity">
    <reaction evidence="1">
        <text>Hydrolysis of Ala-|-Gly bond in repressor LexA.</text>
        <dbReference type="EC" id="3.4.21.88"/>
    </reaction>
</comment>
<comment type="subunit">
    <text evidence="1">Homodimer.</text>
</comment>
<comment type="similarity">
    <text evidence="1">Belongs to the peptidase S24 family.</text>
</comment>
<sequence length="208" mass="22786">MPTQASQKRWKQILQSIYDAIEDHGYPPTVREIGKSVGLSSSSTVAAYLEKLLAAGLIAKDPAKPRTLEVTSAGRDFIGVQDHGIPIVGTVAAGVPITAIENIDDYFPVPDDLPYAADELFMLRVQGNSMIKIGILDGDQIIVKKQNDAENGQIVVAMTEEDEATVKRFYKEKNGIRLHPENDSMDDMFFPDVTILGIVVSLYRPALV</sequence>
<name>LEXA_LACCB</name>
<gene>
    <name evidence="1" type="primary">lexA</name>
    <name type="ordered locus">LCABL_07950</name>
</gene>
<evidence type="ECO:0000255" key="1">
    <source>
        <dbReference type="HAMAP-Rule" id="MF_00015"/>
    </source>
</evidence>